<gene>
    <name type="ordered locus">MIMI_R643</name>
</gene>
<name>YR643_MIMIV</name>
<sequence>MWVNDINIMSYQAMARNYINGKWRHAPNRADPCGVCRPVPLLCPVNGGACDPMGPCGLAASSKCSPQCGPCSPNFPYPTGPGGTTICDFAAAACGGATGNVCNMCPGGSCGGIGGCYGANSPCGLNGTIGCGGCGSGCCGSQVGTGFHLARGSCDPNYVSGCSSPCGTCRPPNAPSTLCDLALLGISPVPLGMPVSQSVTTLGIPPGAVPPPPPVPITGGVPPFGGPSCGPTVFGGGSFGGSCGGSCGGSCGGGSCGGGSCGGKSGKKDCCKSCRKGKKCKCKKKKCCGVEQFSVCTDGPSIQIGGPCAPPPPPIPPIPGVGVSYDTQVGPAIPLNQCDYPWAEYWPWVVGSWAGQYTNEM</sequence>
<feature type="chain" id="PRO_0000247407" description="Uncharacterized protein R643">
    <location>
        <begin position="1"/>
        <end position="361"/>
    </location>
</feature>
<protein>
    <recommendedName>
        <fullName>Uncharacterized protein R643</fullName>
    </recommendedName>
</protein>
<dbReference type="EMBL" id="AY653733">
    <property type="protein sequence ID" value="AAV50904.1"/>
    <property type="molecule type" value="Genomic_DNA"/>
</dbReference>
<dbReference type="KEGG" id="vg:9925287"/>
<dbReference type="Proteomes" id="UP000001134">
    <property type="component" value="Genome"/>
</dbReference>
<accession>Q5UR89</accession>
<proteinExistence type="predicted"/>
<keyword id="KW-1185">Reference proteome</keyword>
<organismHost>
    <name type="scientific">Acanthamoeba polyphaga</name>
    <name type="common">Amoeba</name>
    <dbReference type="NCBI Taxonomy" id="5757"/>
</organismHost>
<reference key="1">
    <citation type="journal article" date="2004" name="Science">
        <title>The 1.2-megabase genome sequence of Mimivirus.</title>
        <authorList>
            <person name="Raoult D."/>
            <person name="Audic S."/>
            <person name="Robert C."/>
            <person name="Abergel C."/>
            <person name="Renesto P."/>
            <person name="Ogata H."/>
            <person name="La Scola B."/>
            <person name="Susan M."/>
            <person name="Claverie J.-M."/>
        </authorList>
    </citation>
    <scope>NUCLEOTIDE SEQUENCE [LARGE SCALE GENOMIC DNA]</scope>
    <source>
        <strain>Rowbotham-Bradford</strain>
    </source>
</reference>
<organism>
    <name type="scientific">Acanthamoeba polyphaga mimivirus</name>
    <name type="common">APMV</name>
    <dbReference type="NCBI Taxonomy" id="212035"/>
    <lineage>
        <taxon>Viruses</taxon>
        <taxon>Varidnaviria</taxon>
        <taxon>Bamfordvirae</taxon>
        <taxon>Nucleocytoviricota</taxon>
        <taxon>Megaviricetes</taxon>
        <taxon>Imitervirales</taxon>
        <taxon>Mimiviridae</taxon>
        <taxon>Megamimivirinae</taxon>
        <taxon>Mimivirus</taxon>
        <taxon>Mimivirus bradfordmassiliense</taxon>
    </lineage>
</organism>